<accession>Q9KB30</accession>
<accession>Q8GLI2</accession>
<keyword id="KW-0002">3D-structure</keyword>
<keyword id="KW-0119">Carbohydrate metabolism</keyword>
<keyword id="KW-0903">Direct protein sequencing</keyword>
<keyword id="KW-0326">Glycosidase</keyword>
<keyword id="KW-0378">Hydrolase</keyword>
<keyword id="KW-0624">Polysaccharide degradation</keyword>
<keyword id="KW-1185">Reference proteome</keyword>
<keyword id="KW-0858">Xylan degradation</keyword>
<organism>
    <name type="scientific">Halalkalibacterium halodurans (strain ATCC BAA-125 / DSM 18197 / FERM 7344 / JCM 9153 / C-125)</name>
    <name type="common">Bacillus halodurans</name>
    <dbReference type="NCBI Taxonomy" id="272558"/>
    <lineage>
        <taxon>Bacteria</taxon>
        <taxon>Bacillati</taxon>
        <taxon>Bacillota</taxon>
        <taxon>Bacilli</taxon>
        <taxon>Bacillales</taxon>
        <taxon>Bacillaceae</taxon>
        <taxon>Halalkalibacterium (ex Joshi et al. 2022)</taxon>
    </lineage>
</organism>
<protein>
    <recommendedName>
        <fullName evidence="6">Reducing end xylose-releasing exo-oligoxylanase</fullName>
        <shortName evidence="6">Rex</shortName>
        <ecNumber>3.2.1.156</ecNumber>
    </recommendedName>
</protein>
<gene>
    <name type="ordered locus">BH2105</name>
</gene>
<evidence type="ECO:0000250" key="1">
    <source>
        <dbReference type="UniProtKB" id="A0A0S2UQQ5"/>
    </source>
</evidence>
<evidence type="ECO:0000255" key="2"/>
<evidence type="ECO:0000269" key="3">
    <source>
    </source>
</evidence>
<evidence type="ECO:0000269" key="4">
    <source>
    </source>
</evidence>
<evidence type="ECO:0000269" key="5">
    <source>
    </source>
</evidence>
<evidence type="ECO:0000303" key="6">
    <source>
    </source>
</evidence>
<evidence type="ECO:0000305" key="7"/>
<evidence type="ECO:0000312" key="8">
    <source>
        <dbReference type="EMBL" id="AAN16076.1"/>
    </source>
</evidence>
<evidence type="ECO:0000312" key="9">
    <source>
        <dbReference type="EMBL" id="BAB05824.1"/>
    </source>
</evidence>
<evidence type="ECO:0000312" key="10">
    <source>
        <dbReference type="PDB" id="1WU4"/>
    </source>
</evidence>
<evidence type="ECO:0007829" key="11">
    <source>
        <dbReference type="PDB" id="1WU4"/>
    </source>
</evidence>
<evidence type="ECO:0007829" key="12">
    <source>
        <dbReference type="PDB" id="1WU5"/>
    </source>
</evidence>
<evidence type="ECO:0007829" key="13">
    <source>
        <dbReference type="PDB" id="3A3V"/>
    </source>
</evidence>
<name>REOX_HALH5</name>
<reference evidence="9" key="1">
    <citation type="journal article" date="2000" name="Nucleic Acids Res.">
        <title>Complete genome sequence of the alkaliphilic bacterium Bacillus halodurans and genomic sequence comparison with Bacillus subtilis.</title>
        <authorList>
            <person name="Takami H."/>
            <person name="Nakasone K."/>
            <person name="Takaki Y."/>
            <person name="Maeno G."/>
            <person name="Sasaki R."/>
            <person name="Masui N."/>
            <person name="Fuji F."/>
            <person name="Hirama C."/>
            <person name="Nakamura Y."/>
            <person name="Ogasawara N."/>
            <person name="Kuhara S."/>
            <person name="Horikoshi K."/>
        </authorList>
    </citation>
    <scope>NUCLEOTIDE SEQUENCE [LARGE SCALE GENOMIC DNA]</scope>
    <source>
        <strain>ATCC BAA-125 / DSM 18197 / FERM 7344 / JCM 9153 / C-125</strain>
    </source>
</reference>
<reference evidence="7" key="2">
    <citation type="journal article" date="2004" name="J. Biol. Chem.">
        <title>A family 8 glycoside hydrolase from Bacillus halodurans C-125 (BH2105) is a reducing end xylose-releasing exo-oligoxylanase.</title>
        <authorList>
            <person name="Honda Y."/>
            <person name="Kitaoka M."/>
        </authorList>
    </citation>
    <scope>PROTEIN SEQUENCE OF 1-10</scope>
    <scope>FUNCTION</scope>
    <scope>CATALYTIC ACTIVITY</scope>
    <scope>BIOPHYSICOCHEMICAL PROPERTIES</scope>
    <scope>MUTAGENESIS OF GLU-70; ASP-128 AND ASP-263</scope>
    <source>
        <strain>ATCC BAA-125 / DSM 18197 / FERM 7344 / JCM 9153 / C-125</strain>
    </source>
</reference>
<reference evidence="7 8" key="3">
    <citation type="submission" date="2002-07" db="EMBL/GenBank/DDBJ databases">
        <title>Partial ORF identical to Xylanase Y from B. halodurans C-125.</title>
        <authorList>
            <person name="Martinez M.A."/>
            <person name="Baigori M.D."/>
            <person name="Sineriz F."/>
        </authorList>
    </citation>
    <scope>NUCLEOTIDE SEQUENCE [GENOMIC DNA] OF 3-376</scope>
    <source>
        <strain evidence="8">MIR32</strain>
    </source>
</reference>
<reference evidence="7" key="4">
    <citation type="journal article" date="2006" name="J. Biol. Chem.">
        <title>The first glycosynthase derived from an inverting glycoside hydrolase.</title>
        <authorList>
            <person name="Honda Y."/>
            <person name="Kitaoka M."/>
        </authorList>
    </citation>
    <scope>BIOPHYSICOCHEMICAL PROPERTIES</scope>
    <scope>MUTAGENESIS OF ASP-263</scope>
</reference>
<reference evidence="7" key="5">
    <citation type="journal article" date="2008" name="Glycobiology">
        <title>Alternative strategy for converting an inverting glycoside hydrolase into a glycosynthase.</title>
        <authorList>
            <person name="Honda Y."/>
            <person name="Fushinobu S."/>
            <person name="Hidaka M."/>
            <person name="Wakagi T."/>
            <person name="Shoun H."/>
            <person name="Taniguchi H."/>
            <person name="Kitaoka M."/>
        </authorList>
    </citation>
    <scope>MUTAGENESIS OF TYR-198 AND ASP-263</scope>
</reference>
<reference evidence="10" key="6">
    <citation type="journal article" date="2005" name="J. Biol. Chem.">
        <title>Structural basis for the specificity of the reducing end xylose-releasing exo-oligoxylanase from Bacillus halodurans C-125.</title>
        <authorList>
            <person name="Fushinobu S."/>
            <person name="Hidaka M."/>
            <person name="Honda Y."/>
            <person name="Wakagi T."/>
            <person name="Shoun H."/>
            <person name="Kitaoka M."/>
        </authorList>
    </citation>
    <scope>X-RAY CRYSTALLOGRAPHY (1.35 ANGSTROMS)</scope>
</reference>
<proteinExistence type="evidence at protein level"/>
<sequence>MKKTTEGAFYTREYRNLFKEFGYSEAEIQERVKDTWEQLFGDNPETKIYYEVGDDLGYLLDTGNLDVRTEGMSYGMMMAVQMDRKDIFDRIWNWTMKNMYMTEGVHAGYFAWSCQPDGTKNSWGPAPDGEEYFALALFFASHRWGDGDEQPFNYSEQARKLLHTCVHNGEGGPGHPMWNRDNKLIKFIPEVEFSDPSYHLPHFYELFSLWANEEDRVFWKEAAEASREYLKIACHPETGLAPEYAYYDGTPNDEKGYGHFFSDSYRVAANIGLDAEWFGGSEWSAEEINKIQAFFADKEPEDYRRYKIDGEPFEEKSLHPVGLIATNAMGSLASVDGPYAKANVDLFWNTPVRTGNRRYYDNCLYLFAMLALSGNFKIWFPEGQEEEH</sequence>
<dbReference type="EC" id="3.2.1.156"/>
<dbReference type="EMBL" id="BA000004">
    <property type="protein sequence ID" value="BAB05824.1"/>
    <property type="molecule type" value="Genomic_DNA"/>
</dbReference>
<dbReference type="EMBL" id="AY137373">
    <property type="protein sequence ID" value="AAN16076.1"/>
    <property type="molecule type" value="Genomic_DNA"/>
</dbReference>
<dbReference type="PIR" id="A83913">
    <property type="entry name" value="A83913"/>
</dbReference>
<dbReference type="RefSeq" id="WP_010898262.1">
    <property type="nucleotide sequence ID" value="NC_002570.2"/>
</dbReference>
<dbReference type="PDB" id="1WU4">
    <property type="method" value="X-ray"/>
    <property type="resolution" value="1.35 A"/>
    <property type="chains" value="A=1-388"/>
</dbReference>
<dbReference type="PDB" id="1WU5">
    <property type="method" value="X-ray"/>
    <property type="resolution" value="2.20 A"/>
    <property type="chains" value="A=1-388"/>
</dbReference>
<dbReference type="PDB" id="1WU6">
    <property type="method" value="X-ray"/>
    <property type="resolution" value="1.45 A"/>
    <property type="chains" value="A=1-388"/>
</dbReference>
<dbReference type="PDB" id="2DRO">
    <property type="method" value="X-ray"/>
    <property type="resolution" value="1.70 A"/>
    <property type="chains" value="A=1-388"/>
</dbReference>
<dbReference type="PDB" id="2DRQ">
    <property type="method" value="X-ray"/>
    <property type="resolution" value="2.10 A"/>
    <property type="chains" value="A=1-388"/>
</dbReference>
<dbReference type="PDB" id="2DRR">
    <property type="method" value="X-ray"/>
    <property type="resolution" value="1.60 A"/>
    <property type="chains" value="A=1-388"/>
</dbReference>
<dbReference type="PDB" id="2DRS">
    <property type="method" value="X-ray"/>
    <property type="resolution" value="2.10 A"/>
    <property type="chains" value="A=1-388"/>
</dbReference>
<dbReference type="PDB" id="3A3V">
    <property type="method" value="X-ray"/>
    <property type="resolution" value="1.39 A"/>
    <property type="chains" value="A=1-388"/>
</dbReference>
<dbReference type="PDBsum" id="1WU4"/>
<dbReference type="PDBsum" id="1WU5"/>
<dbReference type="PDBsum" id="1WU6"/>
<dbReference type="PDBsum" id="2DRO"/>
<dbReference type="PDBsum" id="2DRQ"/>
<dbReference type="PDBsum" id="2DRR"/>
<dbReference type="PDBsum" id="2DRS"/>
<dbReference type="PDBsum" id="3A3V"/>
<dbReference type="SMR" id="Q9KB30"/>
<dbReference type="STRING" id="272558.gene:10728003"/>
<dbReference type="DrugBank" id="DB03389">
    <property type="generic name" value="alpha-D-Xylopyranose"/>
</dbReference>
<dbReference type="CAZy" id="GH8">
    <property type="family name" value="Glycoside Hydrolase Family 8"/>
</dbReference>
<dbReference type="GeneID" id="87597657"/>
<dbReference type="KEGG" id="bha:BH2105"/>
<dbReference type="eggNOG" id="COG3405">
    <property type="taxonomic scope" value="Bacteria"/>
</dbReference>
<dbReference type="HOGENOM" id="CLU_037722_0_0_9"/>
<dbReference type="OrthoDB" id="9803461at2"/>
<dbReference type="BioCyc" id="MetaCyc:MONOMER-17885"/>
<dbReference type="BRENDA" id="3.2.1.156">
    <property type="organism ID" value="661"/>
</dbReference>
<dbReference type="EvolutionaryTrace" id="Q9KB30"/>
<dbReference type="Proteomes" id="UP000001258">
    <property type="component" value="Chromosome"/>
</dbReference>
<dbReference type="GO" id="GO:0033951">
    <property type="term" value="F:oligosaccharide reducing-end xylanase activity"/>
    <property type="evidence" value="ECO:0007669"/>
    <property type="project" value="UniProtKB-EC"/>
</dbReference>
<dbReference type="GO" id="GO:0045493">
    <property type="term" value="P:xylan catabolic process"/>
    <property type="evidence" value="ECO:0007669"/>
    <property type="project" value="UniProtKB-KW"/>
</dbReference>
<dbReference type="Gene3D" id="1.50.10.10">
    <property type="match status" value="1"/>
</dbReference>
<dbReference type="InterPro" id="IPR008928">
    <property type="entry name" value="6-hairpin_glycosidase_sf"/>
</dbReference>
<dbReference type="InterPro" id="IPR012341">
    <property type="entry name" value="6hp_glycosidase-like_sf"/>
</dbReference>
<dbReference type="InterPro" id="IPR002037">
    <property type="entry name" value="Glyco_hydro_8"/>
</dbReference>
<dbReference type="Pfam" id="PF01270">
    <property type="entry name" value="Glyco_hydro_8"/>
    <property type="match status" value="1"/>
</dbReference>
<dbReference type="PRINTS" id="PR00735">
    <property type="entry name" value="GLHYDRLASE8"/>
</dbReference>
<dbReference type="SUPFAM" id="SSF48208">
    <property type="entry name" value="Six-hairpin glycosidases"/>
    <property type="match status" value="1"/>
</dbReference>
<feature type="chain" id="PRO_0000397235" description="Reducing end xylose-releasing exo-oligoxylanase">
    <location>
        <begin position="1"/>
        <end position="388"/>
    </location>
</feature>
<feature type="active site" description="Proton donor" evidence="1">
    <location>
        <position position="70"/>
    </location>
</feature>
<feature type="active site" description="Proton acceptor" evidence="1">
    <location>
        <position position="263"/>
    </location>
</feature>
<feature type="mutagenesis site" description="Activity is 0.01% of wild type." evidence="3">
    <original>E</original>
    <variation>A</variation>
    <location>
        <position position="70"/>
    </location>
</feature>
<feature type="mutagenesis site" description="Activity is 0.4% of wild type." evidence="3">
    <original>D</original>
    <variation>A</variation>
    <location>
        <position position="128"/>
    </location>
</feature>
<feature type="mutagenesis site" description="Has high levels of glycosynthase activity. Reduced hydrolase activity." evidence="5">
    <original>Y</original>
    <variation>F</variation>
    <location>
        <position position="198"/>
    </location>
</feature>
<feature type="mutagenesis site" description="Activity is 0.02% of wild type. Has glycosynthase activity." evidence="3 4 5">
    <original>D</original>
    <variation>A</variation>
    <location>
        <position position="263"/>
    </location>
</feature>
<feature type="mutagenesis site" description="Has high levels of glycosynthase activity. Reduced hydrolase activity." evidence="3 4 5">
    <original>D</original>
    <variation>C</variation>
    <variation>N</variation>
    <location>
        <position position="263"/>
    </location>
</feature>
<feature type="mutagenesis site" description="Has glycosynthase activity." evidence="3 4 5">
    <original>D</original>
    <variation>G</variation>
    <variation>L</variation>
    <variation>P</variation>
    <variation>S</variation>
    <variation>T</variation>
    <variation>V</variation>
    <location>
        <position position="263"/>
    </location>
</feature>
<feature type="sequence conflict" description="In Ref. 2; AA sequence." evidence="7" ref="2">
    <original>K</original>
    <variation>E</variation>
    <location>
        <position position="2"/>
    </location>
</feature>
<feature type="helix" evidence="11">
    <location>
        <begin position="8"/>
        <end position="11"/>
    </location>
</feature>
<feature type="helix" evidence="11">
    <location>
        <begin position="17"/>
        <end position="20"/>
    </location>
</feature>
<feature type="helix" evidence="11">
    <location>
        <begin position="25"/>
        <end position="40"/>
    </location>
</feature>
<feature type="turn" evidence="13">
    <location>
        <begin position="44"/>
        <end position="46"/>
    </location>
</feature>
<feature type="strand" evidence="11">
    <location>
        <begin position="49"/>
        <end position="52"/>
    </location>
</feature>
<feature type="turn" evidence="11">
    <location>
        <begin position="53"/>
        <end position="55"/>
    </location>
</feature>
<feature type="strand" evidence="11">
    <location>
        <begin position="56"/>
        <end position="59"/>
    </location>
</feature>
<feature type="turn" evidence="11">
    <location>
        <begin position="62"/>
        <end position="65"/>
    </location>
</feature>
<feature type="strand" evidence="11">
    <location>
        <begin position="66"/>
        <end position="68"/>
    </location>
</feature>
<feature type="helix" evidence="11">
    <location>
        <begin position="69"/>
        <end position="81"/>
    </location>
</feature>
<feature type="helix" evidence="11">
    <location>
        <begin position="85"/>
        <end position="98"/>
    </location>
</feature>
<feature type="strand" evidence="12">
    <location>
        <begin position="102"/>
        <end position="104"/>
    </location>
</feature>
<feature type="turn" evidence="11">
    <location>
        <begin position="105"/>
        <end position="108"/>
    </location>
</feature>
<feature type="strand" evidence="11">
    <location>
        <begin position="112"/>
        <end position="114"/>
    </location>
</feature>
<feature type="helix" evidence="11">
    <location>
        <begin position="127"/>
        <end position="144"/>
    </location>
</feature>
<feature type="helix" evidence="11">
    <location>
        <begin position="154"/>
        <end position="167"/>
    </location>
</feature>
<feature type="strand" evidence="11">
    <location>
        <begin position="170"/>
        <end position="173"/>
    </location>
</feature>
<feature type="turn" evidence="11">
    <location>
        <begin position="180"/>
        <end position="182"/>
    </location>
</feature>
<feature type="strand" evidence="11">
    <location>
        <begin position="192"/>
        <end position="194"/>
    </location>
</feature>
<feature type="helix" evidence="11">
    <location>
        <begin position="196"/>
        <end position="198"/>
    </location>
</feature>
<feature type="helix" evidence="11">
    <location>
        <begin position="201"/>
        <end position="210"/>
    </location>
</feature>
<feature type="helix" evidence="11">
    <location>
        <begin position="213"/>
        <end position="215"/>
    </location>
</feature>
<feature type="helix" evidence="11">
    <location>
        <begin position="216"/>
        <end position="233"/>
    </location>
</feature>
<feature type="turn" evidence="11">
    <location>
        <begin position="236"/>
        <end position="238"/>
    </location>
</feature>
<feature type="strand" evidence="11">
    <location>
        <begin position="243"/>
        <end position="246"/>
    </location>
</feature>
<feature type="strand" evidence="11">
    <location>
        <begin position="249"/>
        <end position="251"/>
    </location>
</feature>
<feature type="strand" evidence="11">
    <location>
        <begin position="258"/>
        <end position="261"/>
    </location>
</feature>
<feature type="helix" evidence="11">
    <location>
        <begin position="262"/>
        <end position="265"/>
    </location>
</feature>
<feature type="helix" evidence="11">
    <location>
        <begin position="266"/>
        <end position="278"/>
    </location>
</feature>
<feature type="helix" evidence="11">
    <location>
        <begin position="282"/>
        <end position="295"/>
    </location>
</feature>
<feature type="helix" evidence="11">
    <location>
        <begin position="300"/>
        <end position="302"/>
    </location>
</feature>
<feature type="strand" evidence="11">
    <location>
        <begin position="304"/>
        <end position="306"/>
    </location>
</feature>
<feature type="strand" evidence="11">
    <location>
        <begin position="312"/>
        <end position="316"/>
    </location>
</feature>
<feature type="helix" evidence="11">
    <location>
        <begin position="320"/>
        <end position="329"/>
    </location>
</feature>
<feature type="helix" evidence="11">
    <location>
        <begin position="330"/>
        <end position="333"/>
    </location>
</feature>
<feature type="helix" evidence="11">
    <location>
        <begin position="340"/>
        <end position="348"/>
    </location>
</feature>
<feature type="helix" evidence="11">
    <location>
        <begin position="359"/>
        <end position="372"/>
    </location>
</feature>
<comment type="function">
    <text evidence="3">Hydrolyzes xylooligosaccharides with a degree of polymerization of greater than or equal to 3, releasing xylose from the reducing end. Only hydrolyzes the beta anomers of xylooligosaccharides, with inversion of anomeric configuration. Hydrolyzes the glucose and xylose-based trisaccharides where xylose is located at the -1 subsite, GXX, XXG and GXG. Does not hydrolyze xylan, chitosan, lichenan, curdlan or carboxymethylcellulose.</text>
</comment>
<comment type="catalytic activity">
    <reaction evidence="3">
        <text>Hydrolysis of (1-&gt;4)-beta-D-xylose residues from the reducing end of oligosaccharides.</text>
        <dbReference type="EC" id="3.2.1.156"/>
    </reaction>
</comment>
<comment type="biophysicochemical properties">
    <kinetics>
        <KM evidence="3 4">2.4 mM for X3 (in 50 mM sodium phosphate, pH 7.1, 40 degrees Celsius)</KM>
        <KM evidence="3 4">5 mM for X4 (in 50 mM sodium phosphate, pH 7.1, 40 degrees Celsius)</KM>
        <KM evidence="3 4">4.4 mM for X5 (in 50 mM sodium phosphate, pH 7.1, 40 degrees Celsius)</KM>
        <KM evidence="3 4">18.5 mM for X6 (in 50 mM sodium phosphate, pH 7.1, 40 degrees Celsius)</KM>
        <KM evidence="3 4">4.3 mM for X3 (in 0.1 M MOPS, pH 7.0, 30 degrees Celsius)</KM>
    </kinetics>
    <phDependence>
        <text evidence="3 4">Optimum pH is 6.2-7.3. Stable between pH 5.0 and 9.8 for 30 minutes at 30 degrees Celsius.</text>
    </phDependence>
    <temperatureDependence>
        <text evidence="3 4">Optimum temperature is 50 degrees Celsius. Stable up to 40 degrees Celsius.</text>
    </temperatureDependence>
</comment>
<comment type="similarity">
    <text evidence="2">Belongs to the glycosyl hydrolase 8 (cellulase D) family.</text>
</comment>